<reference key="1">
    <citation type="journal article" date="2001" name="FEBS Lett.">
        <title>The human and murine protocadherin-beta one-exon gene families show high evolutionary conservation, despite the difference in gene number.</title>
        <authorList>
            <person name="Vanhalst K."/>
            <person name="Kools P."/>
            <person name="Vanden Eynde E."/>
            <person name="van Roy F."/>
        </authorList>
    </citation>
    <scope>NUCLEOTIDE SEQUENCE [GENOMIC DNA / MRNA]</scope>
</reference>
<reference key="2">
    <citation type="journal article" date="2001" name="Genome Res.">
        <title>Comparative DNA sequence analysis of mouse and human protocadherin gene clusters.</title>
        <authorList>
            <person name="Wu Q."/>
            <person name="Zhang T."/>
            <person name="Cheng J.-F."/>
            <person name="Kim Y."/>
            <person name="Grimwood J."/>
            <person name="Schmutz J."/>
            <person name="Dickson M."/>
            <person name="Noonan J.P."/>
            <person name="Zhang M.Q."/>
            <person name="Myers R.M."/>
            <person name="Maniatis T."/>
        </authorList>
    </citation>
    <scope>NUCLEOTIDE SEQUENCE [MRNA]</scope>
    <scope>VARIANTS ARG-525 AND SER-532</scope>
</reference>
<reference key="3">
    <citation type="journal article" date="2000" name="DNA Res.">
        <title>Prediction of the coding sequences of unidentified human genes. XVIII. The complete sequences of 100 new cDNA clones from brain which code for large proteins in vitro.</title>
        <authorList>
            <person name="Nagase T."/>
            <person name="Kikuno R."/>
            <person name="Nakayama M."/>
            <person name="Hirosawa M."/>
            <person name="Ohara O."/>
        </authorList>
    </citation>
    <scope>NUCLEOTIDE SEQUENCE [LARGE SCALE MRNA]</scope>
    <scope>VARIANTS ARG-525 AND SER-532</scope>
    <source>
        <tissue>Brain</tissue>
    </source>
</reference>
<reference key="4">
    <citation type="journal article" date="2004" name="Nat. Genet.">
        <title>Complete sequencing and characterization of 21,243 full-length human cDNAs.</title>
        <authorList>
            <person name="Ota T."/>
            <person name="Suzuki Y."/>
            <person name="Nishikawa T."/>
            <person name="Otsuki T."/>
            <person name="Sugiyama T."/>
            <person name="Irie R."/>
            <person name="Wakamatsu A."/>
            <person name="Hayashi K."/>
            <person name="Sato H."/>
            <person name="Nagai K."/>
            <person name="Kimura K."/>
            <person name="Makita H."/>
            <person name="Sekine M."/>
            <person name="Obayashi M."/>
            <person name="Nishi T."/>
            <person name="Shibahara T."/>
            <person name="Tanaka T."/>
            <person name="Ishii S."/>
            <person name="Yamamoto J."/>
            <person name="Saito K."/>
            <person name="Kawai Y."/>
            <person name="Isono Y."/>
            <person name="Nakamura Y."/>
            <person name="Nagahari K."/>
            <person name="Murakami K."/>
            <person name="Yasuda T."/>
            <person name="Iwayanagi T."/>
            <person name="Wagatsuma M."/>
            <person name="Shiratori A."/>
            <person name="Sudo H."/>
            <person name="Hosoiri T."/>
            <person name="Kaku Y."/>
            <person name="Kodaira H."/>
            <person name="Kondo H."/>
            <person name="Sugawara M."/>
            <person name="Takahashi M."/>
            <person name="Kanda K."/>
            <person name="Yokoi T."/>
            <person name="Furuya T."/>
            <person name="Kikkawa E."/>
            <person name="Omura Y."/>
            <person name="Abe K."/>
            <person name="Kamihara K."/>
            <person name="Katsuta N."/>
            <person name="Sato K."/>
            <person name="Tanikawa M."/>
            <person name="Yamazaki M."/>
            <person name="Ninomiya K."/>
            <person name="Ishibashi T."/>
            <person name="Yamashita H."/>
            <person name="Murakawa K."/>
            <person name="Fujimori K."/>
            <person name="Tanai H."/>
            <person name="Kimata M."/>
            <person name="Watanabe M."/>
            <person name="Hiraoka S."/>
            <person name="Chiba Y."/>
            <person name="Ishida S."/>
            <person name="Ono Y."/>
            <person name="Takiguchi S."/>
            <person name="Watanabe S."/>
            <person name="Yosida M."/>
            <person name="Hotuta T."/>
            <person name="Kusano J."/>
            <person name="Kanehori K."/>
            <person name="Takahashi-Fujii A."/>
            <person name="Hara H."/>
            <person name="Tanase T.-O."/>
            <person name="Nomura Y."/>
            <person name="Togiya S."/>
            <person name="Komai F."/>
            <person name="Hara R."/>
            <person name="Takeuchi K."/>
            <person name="Arita M."/>
            <person name="Imose N."/>
            <person name="Musashino K."/>
            <person name="Yuuki H."/>
            <person name="Oshima A."/>
            <person name="Sasaki N."/>
            <person name="Aotsuka S."/>
            <person name="Yoshikawa Y."/>
            <person name="Matsunawa H."/>
            <person name="Ichihara T."/>
            <person name="Shiohata N."/>
            <person name="Sano S."/>
            <person name="Moriya S."/>
            <person name="Momiyama H."/>
            <person name="Satoh N."/>
            <person name="Takami S."/>
            <person name="Terashima Y."/>
            <person name="Suzuki O."/>
            <person name="Nakagawa S."/>
            <person name="Senoh A."/>
            <person name="Mizoguchi H."/>
            <person name="Goto Y."/>
            <person name="Shimizu F."/>
            <person name="Wakebe H."/>
            <person name="Hishigaki H."/>
            <person name="Watanabe T."/>
            <person name="Sugiyama A."/>
            <person name="Takemoto M."/>
            <person name="Kawakami B."/>
            <person name="Yamazaki M."/>
            <person name="Watanabe K."/>
            <person name="Kumagai A."/>
            <person name="Itakura S."/>
            <person name="Fukuzumi Y."/>
            <person name="Fujimori Y."/>
            <person name="Komiyama M."/>
            <person name="Tashiro H."/>
            <person name="Tanigami A."/>
            <person name="Fujiwara T."/>
            <person name="Ono T."/>
            <person name="Yamada K."/>
            <person name="Fujii Y."/>
            <person name="Ozaki K."/>
            <person name="Hirao M."/>
            <person name="Ohmori Y."/>
            <person name="Kawabata A."/>
            <person name="Hikiji T."/>
            <person name="Kobatake N."/>
            <person name="Inagaki H."/>
            <person name="Ikema Y."/>
            <person name="Okamoto S."/>
            <person name="Okitani R."/>
            <person name="Kawakami T."/>
            <person name="Noguchi S."/>
            <person name="Itoh T."/>
            <person name="Shigeta K."/>
            <person name="Senba T."/>
            <person name="Matsumura K."/>
            <person name="Nakajima Y."/>
            <person name="Mizuno T."/>
            <person name="Morinaga M."/>
            <person name="Sasaki M."/>
            <person name="Togashi T."/>
            <person name="Oyama M."/>
            <person name="Hata H."/>
            <person name="Watanabe M."/>
            <person name="Komatsu T."/>
            <person name="Mizushima-Sugano J."/>
            <person name="Satoh T."/>
            <person name="Shirai Y."/>
            <person name="Takahashi Y."/>
            <person name="Nakagawa K."/>
            <person name="Okumura K."/>
            <person name="Nagase T."/>
            <person name="Nomura N."/>
            <person name="Kikuchi H."/>
            <person name="Masuho Y."/>
            <person name="Yamashita R."/>
            <person name="Nakai K."/>
            <person name="Yada T."/>
            <person name="Nakamura Y."/>
            <person name="Ohara O."/>
            <person name="Isogai T."/>
            <person name="Sugano S."/>
        </authorList>
    </citation>
    <scope>NUCLEOTIDE SEQUENCE [LARGE SCALE MRNA]</scope>
    <scope>VARIANTS ARG-525 AND SER-532</scope>
</reference>
<reference key="5">
    <citation type="journal article" date="2004" name="Nature">
        <title>The DNA sequence and comparative analysis of human chromosome 5.</title>
        <authorList>
            <person name="Schmutz J."/>
            <person name="Martin J."/>
            <person name="Terry A."/>
            <person name="Couronne O."/>
            <person name="Grimwood J."/>
            <person name="Lowry S."/>
            <person name="Gordon L.A."/>
            <person name="Scott D."/>
            <person name="Xie G."/>
            <person name="Huang W."/>
            <person name="Hellsten U."/>
            <person name="Tran-Gyamfi M."/>
            <person name="She X."/>
            <person name="Prabhakar S."/>
            <person name="Aerts A."/>
            <person name="Altherr M."/>
            <person name="Bajorek E."/>
            <person name="Black S."/>
            <person name="Branscomb E."/>
            <person name="Caoile C."/>
            <person name="Challacombe J.F."/>
            <person name="Chan Y.M."/>
            <person name="Denys M."/>
            <person name="Detter J.C."/>
            <person name="Escobar J."/>
            <person name="Flowers D."/>
            <person name="Fotopulos D."/>
            <person name="Glavina T."/>
            <person name="Gomez M."/>
            <person name="Gonzales E."/>
            <person name="Goodstein D."/>
            <person name="Grigoriev I."/>
            <person name="Groza M."/>
            <person name="Hammon N."/>
            <person name="Hawkins T."/>
            <person name="Haydu L."/>
            <person name="Israni S."/>
            <person name="Jett J."/>
            <person name="Kadner K."/>
            <person name="Kimball H."/>
            <person name="Kobayashi A."/>
            <person name="Lopez F."/>
            <person name="Lou Y."/>
            <person name="Martinez D."/>
            <person name="Medina C."/>
            <person name="Morgan J."/>
            <person name="Nandkeshwar R."/>
            <person name="Noonan J.P."/>
            <person name="Pitluck S."/>
            <person name="Pollard M."/>
            <person name="Predki P."/>
            <person name="Priest J."/>
            <person name="Ramirez L."/>
            <person name="Retterer J."/>
            <person name="Rodriguez A."/>
            <person name="Rogers S."/>
            <person name="Salamov A."/>
            <person name="Salazar A."/>
            <person name="Thayer N."/>
            <person name="Tice H."/>
            <person name="Tsai M."/>
            <person name="Ustaszewska A."/>
            <person name="Vo N."/>
            <person name="Wheeler J."/>
            <person name="Wu K."/>
            <person name="Yang J."/>
            <person name="Dickson M."/>
            <person name="Cheng J.-F."/>
            <person name="Eichler E.E."/>
            <person name="Olsen A."/>
            <person name="Pennacchio L.A."/>
            <person name="Rokhsar D.S."/>
            <person name="Richardson P."/>
            <person name="Lucas S.M."/>
            <person name="Myers R.M."/>
            <person name="Rubin E.M."/>
        </authorList>
    </citation>
    <scope>NUCLEOTIDE SEQUENCE [LARGE SCALE GENOMIC DNA]</scope>
</reference>
<reference key="6">
    <citation type="submission" date="2005-09" db="EMBL/GenBank/DDBJ databases">
        <authorList>
            <person name="Mural R.J."/>
            <person name="Istrail S."/>
            <person name="Sutton G.G."/>
            <person name="Florea L."/>
            <person name="Halpern A.L."/>
            <person name="Mobarry C.M."/>
            <person name="Lippert R."/>
            <person name="Walenz B."/>
            <person name="Shatkay H."/>
            <person name="Dew I."/>
            <person name="Miller J.R."/>
            <person name="Flanigan M.J."/>
            <person name="Edwards N.J."/>
            <person name="Bolanos R."/>
            <person name="Fasulo D."/>
            <person name="Halldorsson B.V."/>
            <person name="Hannenhalli S."/>
            <person name="Turner R."/>
            <person name="Yooseph S."/>
            <person name="Lu F."/>
            <person name="Nusskern D.R."/>
            <person name="Shue B.C."/>
            <person name="Zheng X.H."/>
            <person name="Zhong F."/>
            <person name="Delcher A.L."/>
            <person name="Huson D.H."/>
            <person name="Kravitz S.A."/>
            <person name="Mouchard L."/>
            <person name="Reinert K."/>
            <person name="Remington K.A."/>
            <person name="Clark A.G."/>
            <person name="Waterman M.S."/>
            <person name="Eichler E.E."/>
            <person name="Adams M.D."/>
            <person name="Hunkapiller M.W."/>
            <person name="Myers E.W."/>
            <person name="Venter J.C."/>
        </authorList>
    </citation>
    <scope>NUCLEOTIDE SEQUENCE [LARGE SCALE GENOMIC DNA]</scope>
    <scope>VARIANTS ARG-525 AND SER-532</scope>
</reference>
<reference key="7">
    <citation type="journal article" date="2004" name="Genome Res.">
        <title>The status, quality, and expansion of the NIH full-length cDNA project: the Mammalian Gene Collection (MGC).</title>
        <authorList>
            <consortium name="The MGC Project Team"/>
        </authorList>
    </citation>
    <scope>NUCLEOTIDE SEQUENCE [LARGE SCALE MRNA]</scope>
    <source>
        <tissue>Brain</tissue>
    </source>
</reference>
<reference key="8">
    <citation type="journal article" date="2003" name="Nat. Biotechnol.">
        <title>Exploring proteomes and analyzing protein processing by mass spectrometric identification of sorted N-terminal peptides.</title>
        <authorList>
            <person name="Gevaert K."/>
            <person name="Goethals M."/>
            <person name="Martens L."/>
            <person name="Van Damme J."/>
            <person name="Staes A."/>
            <person name="Thomas G.R."/>
            <person name="Vandekerckhove J."/>
        </authorList>
    </citation>
    <scope>PROTEIN SEQUENCE OF 518-525</scope>
    <source>
        <tissue>Platelet</tissue>
    </source>
</reference>
<gene>
    <name evidence="10" type="primary">PCDHB16</name>
    <name evidence="8" type="synonym">KIAA1621</name>
    <name type="synonym">PCDH3X</name>
</gene>
<name>PCDBG_HUMAN</name>
<proteinExistence type="evidence at protein level"/>
<protein>
    <recommendedName>
        <fullName evidence="9">Protocadherin beta-16</fullName>
        <shortName>PCDH-beta-16</shortName>
    </recommendedName>
    <alternativeName>
        <fullName>Protocadherin-3X</fullName>
    </alternativeName>
</protein>
<evidence type="ECO:0000250" key="1"/>
<evidence type="ECO:0000255" key="2"/>
<evidence type="ECO:0000255" key="3">
    <source>
        <dbReference type="PROSITE-ProRule" id="PRU00043"/>
    </source>
</evidence>
<evidence type="ECO:0000269" key="4">
    <source>
    </source>
</evidence>
<evidence type="ECO:0000269" key="5">
    <source>
    </source>
</evidence>
<evidence type="ECO:0000269" key="6">
    <source>
    </source>
</evidence>
<evidence type="ECO:0000269" key="7">
    <source ref="6"/>
</evidence>
<evidence type="ECO:0000303" key="8">
    <source>
    </source>
</evidence>
<evidence type="ECO:0000305" key="9"/>
<evidence type="ECO:0000312" key="10">
    <source>
        <dbReference type="HGNC" id="HGNC:14546"/>
    </source>
</evidence>
<sequence>MEIGWMHNRRQRQVLVFFVLLSLSGAGAELGSYSVVEETERGSFVANLGKDLGLGLTEMSTRKARIISQGNKQHLQLKAQTGDLLINEKLDREELCGPTEPCILHFQVLMENPLEIFQAELRVIDINDHSPMFTEKEMILKIPENSPLGTEFPLNHALDLDVGSNNVQNYKISPSSHFRVLIHEFRDGRKYPELVLDKELDREEEPQLRLTLTALDGGSPPRSGTAQVRIEVVDINDNAPEFEQPIYKVQIPENSPLGSLVATVSARDLDGGANGKISYTLFQPSEDISKTLEVNPMTGEVRLRKQVDFEMVTSYEVRIKATDGGGLSGKCTLLLQVVDVNDNPPQVTMSALTSPIPENSPEIVVAVFSVSDPDSGNNGKTISSIQEDLPFLLKPSVKNFYTLVTERALDREARAEYNITLTVTDMGTPRLKTEHNITVQISDVNDNAPTFTQTSYTLFVRENNSPALHIGSVSATDRDSGTNAQVTYSLLPPQDPHLPLASLVSINADNGHLFALRSLDYEALQAFEFRVGATDRGSPALSREALVRVLVLDANDNSPFVLYPLQNGSAPCTELVPRAAEPGYLVTKVVAVDGDSGQNAWLSYQLLKATEPGLFGVWAHNGEVRTARLLSERDAAKQRLVVLVKDNGEPPRSATATLHVLLVDGFSQPFLPLPEAAPGQTQANSLTVYLVVALASVSSLFLFSVLLFVAVRLCRRSRAASVGRCSMPEGPFPGRLVDVSGTGTLSQSYQYEVCLTGGSETSEFKFLKPIIPNFSP</sequence>
<feature type="signal peptide" evidence="2">
    <location>
        <begin position="1"/>
        <end position="28"/>
    </location>
</feature>
<feature type="chain" id="PRO_0000003944" description="Protocadherin beta-16">
    <location>
        <begin position="29"/>
        <end position="776"/>
    </location>
</feature>
<feature type="topological domain" description="Extracellular" evidence="2">
    <location>
        <begin position="29"/>
        <end position="690"/>
    </location>
</feature>
<feature type="transmembrane region" description="Helical" evidence="2">
    <location>
        <begin position="691"/>
        <end position="711"/>
    </location>
</feature>
<feature type="topological domain" description="Cytoplasmic" evidence="2">
    <location>
        <begin position="712"/>
        <end position="776"/>
    </location>
</feature>
<feature type="domain" description="Cadherin 1" evidence="3">
    <location>
        <begin position="35"/>
        <end position="133"/>
    </location>
</feature>
<feature type="domain" description="Cadherin 2" evidence="3">
    <location>
        <begin position="138"/>
        <end position="242"/>
    </location>
</feature>
<feature type="domain" description="Cadherin 3" evidence="3">
    <location>
        <begin position="247"/>
        <end position="347"/>
    </location>
</feature>
<feature type="domain" description="Cadherin 4" evidence="3">
    <location>
        <begin position="352"/>
        <end position="451"/>
    </location>
</feature>
<feature type="domain" description="Cadherin 5" evidence="3">
    <location>
        <begin position="456"/>
        <end position="561"/>
    </location>
</feature>
<feature type="domain" description="Cadherin 6" evidence="3">
    <location>
        <begin position="568"/>
        <end position="671"/>
    </location>
</feature>
<feature type="glycosylation site" description="N-linked (GlcNAc...) asparagine" evidence="2">
    <location>
        <position position="418"/>
    </location>
</feature>
<feature type="glycosylation site" description="N-linked (GlcNAc...) asparagine" evidence="2">
    <location>
        <position position="436"/>
    </location>
</feature>
<feature type="glycosylation site" description="N-linked (GlcNAc...) asparagine" evidence="2">
    <location>
        <position position="567"/>
    </location>
</feature>
<feature type="sequence variant" id="VAR_055587" description="In dbSNP:rs17096969.">
    <original>D</original>
    <variation>E</variation>
    <location>
        <position position="91"/>
    </location>
</feature>
<feature type="sequence variant" id="VAR_061068" description="In dbSNP:rs28664170.">
    <original>V</original>
    <variation>L</variation>
    <location>
        <position position="347"/>
    </location>
</feature>
<feature type="sequence variant" id="VAR_061069" description="In dbSNP:rs17844648.">
    <original>A</original>
    <variation>T</variation>
    <location>
        <position position="508"/>
    </location>
</feature>
<feature type="sequence variant" id="VAR_026478" description="In dbSNP:rs17844651." evidence="4 5 6 7">
    <original>Q</original>
    <variation>R</variation>
    <location>
        <position position="525"/>
    </location>
</feature>
<feature type="sequence variant" id="VAR_026479" description="In dbSNP:rs2697532." evidence="4 5 6 7">
    <original>G</original>
    <variation>S</variation>
    <location>
        <position position="532"/>
    </location>
</feature>
<feature type="sequence conflict" description="In Ref. 7; AAH36062." evidence="9" ref="7">
    <original>P</original>
    <variation>A</variation>
    <location>
        <position position="357"/>
    </location>
</feature>
<feature type="sequence conflict" description="In Ref. 3; BAB13447." evidence="9" ref="3">
    <original>T</original>
    <variation>I</variation>
    <location>
        <position position="482"/>
    </location>
</feature>
<feature type="sequence conflict" description="In Ref. 3; BAB13447, 4; BAG51717, 2; AAK21988 and 6; EAW61975." evidence="9" ref="3 4 2 6">
    <original>A</original>
    <variation>E</variation>
    <location>
        <position position="526"/>
    </location>
</feature>
<feature type="sequence conflict" description="In Ref. 3; BAB13447, 4; BAG51717, 2; AAK21988 and 6; EAW61975." evidence="9" ref="3 4 2 6">
    <original>R</original>
    <variation>S</variation>
    <location>
        <position position="543"/>
    </location>
</feature>
<feature type="sequence conflict" description="In Ref. 7; AAH36062." evidence="9" ref="7">
    <original>F</original>
    <variation>L</variation>
    <location>
        <position position="560"/>
    </location>
</feature>
<feature type="sequence conflict" description="In Ref. 3; BAB13447." evidence="9" ref="3">
    <original>Q</original>
    <variation>H</variation>
    <location>
        <position position="638"/>
    </location>
</feature>
<feature type="sequence conflict" description="In Ref. 3; BAB13447." evidence="9" ref="3">
    <original>R</original>
    <variation>C</variation>
    <location>
        <position position="652"/>
    </location>
</feature>
<feature type="sequence conflict" description="In Ref. 3; BAB13447." evidence="9" ref="3">
    <original>A</original>
    <variation>V</variation>
    <location>
        <position position="710"/>
    </location>
</feature>
<organism>
    <name type="scientific">Homo sapiens</name>
    <name type="common">Human</name>
    <dbReference type="NCBI Taxonomy" id="9606"/>
    <lineage>
        <taxon>Eukaryota</taxon>
        <taxon>Metazoa</taxon>
        <taxon>Chordata</taxon>
        <taxon>Craniata</taxon>
        <taxon>Vertebrata</taxon>
        <taxon>Euteleostomi</taxon>
        <taxon>Mammalia</taxon>
        <taxon>Eutheria</taxon>
        <taxon>Euarchontoglires</taxon>
        <taxon>Primates</taxon>
        <taxon>Haplorrhini</taxon>
        <taxon>Catarrhini</taxon>
        <taxon>Hominidae</taxon>
        <taxon>Homo</taxon>
    </lineage>
</organism>
<accession>Q9NRJ7</accession>
<accession>B3KPK5</accession>
<accession>Q8IYD5</accession>
<accession>Q96SE9</accession>
<accession>Q9HCF1</accession>
<comment type="function">
    <text>Potential calcium-dependent cell-adhesion protein. May be involved in the establishment and maintenance of specific neuronal connections in the brain.</text>
</comment>
<comment type="subcellular location">
    <subcellularLocation>
        <location evidence="1">Membrane</location>
        <topology evidence="1">Single-pass type I membrane protein</topology>
    </subcellularLocation>
</comment>
<comment type="sequence caution" evidence="9">
    <conflict type="erroneous initiation">
        <sequence resource="EMBL-CDS" id="BAB13447"/>
    </conflict>
    <text>Extended N-terminus.</text>
</comment>
<dbReference type="EMBL" id="AF217757">
    <property type="protein sequence ID" value="AAF81914.1"/>
    <property type="molecule type" value="mRNA"/>
</dbReference>
<dbReference type="EMBL" id="AF282973">
    <property type="protein sequence ID" value="AAG10030.1"/>
    <property type="molecule type" value="Genomic_DNA"/>
</dbReference>
<dbReference type="EMBL" id="AY013878">
    <property type="protein sequence ID" value="AAK21988.1"/>
    <property type="molecule type" value="mRNA"/>
</dbReference>
<dbReference type="EMBL" id="AB046841">
    <property type="protein sequence ID" value="BAB13447.1"/>
    <property type="status" value="ALT_INIT"/>
    <property type="molecule type" value="mRNA"/>
</dbReference>
<dbReference type="EMBL" id="AK056460">
    <property type="protein sequence ID" value="BAG51717.1"/>
    <property type="molecule type" value="mRNA"/>
</dbReference>
<dbReference type="EMBL" id="AC074130">
    <property type="status" value="NOT_ANNOTATED_CDS"/>
    <property type="molecule type" value="Genomic_DNA"/>
</dbReference>
<dbReference type="EMBL" id="CH471062">
    <property type="protein sequence ID" value="EAW61975.1"/>
    <property type="molecule type" value="Genomic_DNA"/>
</dbReference>
<dbReference type="EMBL" id="BC036062">
    <property type="protein sequence ID" value="AAH36062.1"/>
    <property type="molecule type" value="mRNA"/>
</dbReference>
<dbReference type="CCDS" id="CCDS4251.1"/>
<dbReference type="RefSeq" id="NP_066008.2">
    <property type="nucleotide sequence ID" value="NM_020957.4"/>
</dbReference>
<dbReference type="SMR" id="Q9NRJ7"/>
<dbReference type="BioGRID" id="121740">
    <property type="interactions" value="48"/>
</dbReference>
<dbReference type="FunCoup" id="Q9NRJ7">
    <property type="interactions" value="110"/>
</dbReference>
<dbReference type="IntAct" id="Q9NRJ7">
    <property type="interactions" value="40"/>
</dbReference>
<dbReference type="STRING" id="9606.ENSP00000477314"/>
<dbReference type="GlyConnect" id="1680">
    <property type="glycosylation" value="1 N-Linked glycan (1 site)"/>
</dbReference>
<dbReference type="GlyCosmos" id="Q9NRJ7">
    <property type="glycosylation" value="3 sites, 1 glycan"/>
</dbReference>
<dbReference type="GlyGen" id="Q9NRJ7">
    <property type="glycosylation" value="5 sites, 1 N-linked glycan (1 site), 1 O-linked glycan (1 site)"/>
</dbReference>
<dbReference type="iPTMnet" id="Q9NRJ7"/>
<dbReference type="PhosphoSitePlus" id="Q9NRJ7"/>
<dbReference type="SwissPalm" id="Q9NRJ7"/>
<dbReference type="BioMuta" id="PCDHB16"/>
<dbReference type="DMDM" id="308153560"/>
<dbReference type="jPOST" id="Q9NRJ7"/>
<dbReference type="MassIVE" id="Q9NRJ7"/>
<dbReference type="PaxDb" id="9606-ENSP00000477314"/>
<dbReference type="PeptideAtlas" id="Q9NRJ7"/>
<dbReference type="ProteomicsDB" id="82381"/>
<dbReference type="Antibodypedia" id="73991">
    <property type="antibodies" value="115 antibodies from 21 providers"/>
</dbReference>
<dbReference type="DNASU" id="57717"/>
<dbReference type="Ensembl" id="ENST00000609684.3">
    <property type="protein sequence ID" value="ENSP00000477314.1"/>
    <property type="gene ID" value="ENSG00000272674.4"/>
</dbReference>
<dbReference type="Ensembl" id="ENST00000708367.1">
    <property type="protein sequence ID" value="ENSP00000517193.1"/>
    <property type="gene ID" value="ENSG00000291684.1"/>
</dbReference>
<dbReference type="GeneID" id="57717"/>
<dbReference type="KEGG" id="hsa:57717"/>
<dbReference type="MANE-Select" id="ENST00000609684.3">
    <property type="protein sequence ID" value="ENSP00000477314.1"/>
    <property type="RefSeq nucleotide sequence ID" value="NM_020957.4"/>
    <property type="RefSeq protein sequence ID" value="NP_066008.2"/>
</dbReference>
<dbReference type="UCSC" id="uc032vnl.2">
    <property type="organism name" value="human"/>
</dbReference>
<dbReference type="AGR" id="HGNC:14546"/>
<dbReference type="CTD" id="57717"/>
<dbReference type="DisGeNET" id="57717"/>
<dbReference type="GeneCards" id="PCDHB16"/>
<dbReference type="HGNC" id="HGNC:14546">
    <property type="gene designation" value="PCDHB16"/>
</dbReference>
<dbReference type="HPA" id="ENSG00000272674">
    <property type="expression patterns" value="Low tissue specificity"/>
</dbReference>
<dbReference type="MalaCards" id="PCDHB16"/>
<dbReference type="MIM" id="604967">
    <property type="type" value="gene"/>
</dbReference>
<dbReference type="MIM" id="606345">
    <property type="type" value="gene"/>
</dbReference>
<dbReference type="neXtProt" id="NX_Q9NRJ7"/>
<dbReference type="OpenTargets" id="ENSG00000272674"/>
<dbReference type="PharmGKB" id="PA33032"/>
<dbReference type="VEuPathDB" id="HostDB:ENSG00000272674"/>
<dbReference type="eggNOG" id="KOG3594">
    <property type="taxonomic scope" value="Eukaryota"/>
</dbReference>
<dbReference type="GeneTree" id="ENSGT00940000164093"/>
<dbReference type="HOGENOM" id="CLU_006480_3_0_1"/>
<dbReference type="InParanoid" id="Q9NRJ7"/>
<dbReference type="OMA" id="QVLMENP"/>
<dbReference type="OrthoDB" id="6252479at2759"/>
<dbReference type="PAN-GO" id="Q9NRJ7">
    <property type="GO annotations" value="2 GO annotations based on evolutionary models"/>
</dbReference>
<dbReference type="PhylomeDB" id="Q9NRJ7"/>
<dbReference type="TreeFam" id="TF332299"/>
<dbReference type="PathwayCommons" id="Q9NRJ7"/>
<dbReference type="SignaLink" id="Q9NRJ7"/>
<dbReference type="BioGRID-ORCS" id="57717">
    <property type="hits" value="15 hits in 1106 CRISPR screens"/>
</dbReference>
<dbReference type="GeneWiki" id="PCDHB16"/>
<dbReference type="GenomeRNAi" id="57717"/>
<dbReference type="Pharos" id="Q9NRJ7">
    <property type="development level" value="Tdark"/>
</dbReference>
<dbReference type="PRO" id="PR:Q9NRJ7"/>
<dbReference type="Proteomes" id="UP000005640">
    <property type="component" value="Chromosome 5"/>
</dbReference>
<dbReference type="RNAct" id="Q9NRJ7">
    <property type="molecule type" value="protein"/>
</dbReference>
<dbReference type="Bgee" id="ENSG00000272674">
    <property type="expression patterns" value="Expressed in corpus epididymis and 135 other cell types or tissues"/>
</dbReference>
<dbReference type="ExpressionAtlas" id="Q9NRJ7">
    <property type="expression patterns" value="baseline and differential"/>
</dbReference>
<dbReference type="GO" id="GO:0016020">
    <property type="term" value="C:membrane"/>
    <property type="evidence" value="ECO:0000303"/>
    <property type="project" value="UniProtKB"/>
</dbReference>
<dbReference type="GO" id="GO:0005886">
    <property type="term" value="C:plasma membrane"/>
    <property type="evidence" value="ECO:0000318"/>
    <property type="project" value="GO_Central"/>
</dbReference>
<dbReference type="GO" id="GO:0045202">
    <property type="term" value="C:synapse"/>
    <property type="evidence" value="ECO:0007669"/>
    <property type="project" value="GOC"/>
</dbReference>
<dbReference type="GO" id="GO:0005509">
    <property type="term" value="F:calcium ion binding"/>
    <property type="evidence" value="ECO:0007669"/>
    <property type="project" value="InterPro"/>
</dbReference>
<dbReference type="GO" id="GO:0016339">
    <property type="term" value="P:calcium-dependent cell-cell adhesion via plasma membrane cell adhesion molecules"/>
    <property type="evidence" value="ECO:0000303"/>
    <property type="project" value="UniProtKB"/>
</dbReference>
<dbReference type="GO" id="GO:0007155">
    <property type="term" value="P:cell adhesion"/>
    <property type="evidence" value="ECO:0000318"/>
    <property type="project" value="GO_Central"/>
</dbReference>
<dbReference type="GO" id="GO:0007268">
    <property type="term" value="P:chemical synaptic transmission"/>
    <property type="evidence" value="ECO:0000304"/>
    <property type="project" value="UniProtKB"/>
</dbReference>
<dbReference type="GO" id="GO:0007156">
    <property type="term" value="P:homophilic cell adhesion via plasma membrane adhesion molecules"/>
    <property type="evidence" value="ECO:0007669"/>
    <property type="project" value="InterPro"/>
</dbReference>
<dbReference type="GO" id="GO:0007416">
    <property type="term" value="P:synapse assembly"/>
    <property type="evidence" value="ECO:0000304"/>
    <property type="project" value="UniProtKB"/>
</dbReference>
<dbReference type="CDD" id="cd11304">
    <property type="entry name" value="Cadherin_repeat"/>
    <property type="match status" value="5"/>
</dbReference>
<dbReference type="FunFam" id="2.60.40.60:FF:000001">
    <property type="entry name" value="Protocadherin alpha 2"/>
    <property type="match status" value="1"/>
</dbReference>
<dbReference type="FunFam" id="2.60.40.60:FF:000002">
    <property type="entry name" value="Protocadherin alpha 2"/>
    <property type="match status" value="1"/>
</dbReference>
<dbReference type="FunFam" id="2.60.40.60:FF:000006">
    <property type="entry name" value="Protocadherin alpha 2"/>
    <property type="match status" value="1"/>
</dbReference>
<dbReference type="FunFam" id="2.60.40.60:FF:000046">
    <property type="entry name" value="Protocadherin beta 5"/>
    <property type="match status" value="1"/>
</dbReference>
<dbReference type="FunFam" id="2.60.40.60:FF:000309">
    <property type="entry name" value="Protocadherin beta-8"/>
    <property type="match status" value="1"/>
</dbReference>
<dbReference type="FunFam" id="2.60.40.60:FF:000018">
    <property type="entry name" value="Protocadherin gamma c3"/>
    <property type="match status" value="1"/>
</dbReference>
<dbReference type="Gene3D" id="2.60.40.60">
    <property type="entry name" value="Cadherins"/>
    <property type="match status" value="6"/>
</dbReference>
<dbReference type="InterPro" id="IPR002126">
    <property type="entry name" value="Cadherin-like_dom"/>
</dbReference>
<dbReference type="InterPro" id="IPR015919">
    <property type="entry name" value="Cadherin-like_sf"/>
</dbReference>
<dbReference type="InterPro" id="IPR032455">
    <property type="entry name" value="Cadherin_C"/>
</dbReference>
<dbReference type="InterPro" id="IPR020894">
    <property type="entry name" value="Cadherin_CS"/>
</dbReference>
<dbReference type="InterPro" id="IPR013164">
    <property type="entry name" value="Cadherin_N"/>
</dbReference>
<dbReference type="InterPro" id="IPR050174">
    <property type="entry name" value="Protocadherin/Cadherin-CA"/>
</dbReference>
<dbReference type="PANTHER" id="PTHR24028">
    <property type="entry name" value="CADHERIN-87A"/>
    <property type="match status" value="1"/>
</dbReference>
<dbReference type="PANTHER" id="PTHR24028:SF71">
    <property type="entry name" value="PROTOCADHERIN BETA-16"/>
    <property type="match status" value="1"/>
</dbReference>
<dbReference type="Pfam" id="PF00028">
    <property type="entry name" value="Cadherin"/>
    <property type="match status" value="5"/>
</dbReference>
<dbReference type="Pfam" id="PF08266">
    <property type="entry name" value="Cadherin_2"/>
    <property type="match status" value="1"/>
</dbReference>
<dbReference type="Pfam" id="PF16492">
    <property type="entry name" value="Cadherin_C_2"/>
    <property type="match status" value="1"/>
</dbReference>
<dbReference type="PRINTS" id="PR00205">
    <property type="entry name" value="CADHERIN"/>
</dbReference>
<dbReference type="SMART" id="SM00112">
    <property type="entry name" value="CA"/>
    <property type="match status" value="5"/>
</dbReference>
<dbReference type="SUPFAM" id="SSF49313">
    <property type="entry name" value="Cadherin-like"/>
    <property type="match status" value="6"/>
</dbReference>
<dbReference type="PROSITE" id="PS00232">
    <property type="entry name" value="CADHERIN_1"/>
    <property type="match status" value="5"/>
</dbReference>
<dbReference type="PROSITE" id="PS50268">
    <property type="entry name" value="CADHERIN_2"/>
    <property type="match status" value="6"/>
</dbReference>
<keyword id="KW-0106">Calcium</keyword>
<keyword id="KW-0130">Cell adhesion</keyword>
<keyword id="KW-0903">Direct protein sequencing</keyword>
<keyword id="KW-0325">Glycoprotein</keyword>
<keyword id="KW-0472">Membrane</keyword>
<keyword id="KW-1267">Proteomics identification</keyword>
<keyword id="KW-1185">Reference proteome</keyword>
<keyword id="KW-0677">Repeat</keyword>
<keyword id="KW-0732">Signal</keyword>
<keyword id="KW-0812">Transmembrane</keyword>
<keyword id="KW-1133">Transmembrane helix</keyword>